<feature type="chain" id="PRO_0000435740" description="Suppressor of activated egl-4 protein 1" evidence="6">
    <location>
        <begin position="1"/>
        <end position="900"/>
    </location>
</feature>
<feature type="domain" description="ELM2" evidence="2">
    <location>
        <begin position="451"/>
        <end position="544"/>
    </location>
</feature>
<feature type="domain" description="SANT" evidence="3">
    <location>
        <begin position="560"/>
        <end position="611"/>
    </location>
</feature>
<feature type="zinc finger region" description="C2H2-type" evidence="1">
    <location>
        <begin position="736"/>
        <end position="758"/>
    </location>
</feature>
<feature type="region of interest" description="Disordered" evidence="4">
    <location>
        <begin position="1"/>
        <end position="75"/>
    </location>
</feature>
<feature type="region of interest" description="Disordered" evidence="4">
    <location>
        <begin position="340"/>
        <end position="380"/>
    </location>
</feature>
<feature type="region of interest" description="Disordered" evidence="4">
    <location>
        <begin position="406"/>
        <end position="425"/>
    </location>
</feature>
<feature type="region of interest" description="Disordered" evidence="4">
    <location>
        <begin position="710"/>
        <end position="729"/>
    </location>
</feature>
<feature type="compositionally biased region" description="Polar residues" evidence="4">
    <location>
        <begin position="53"/>
        <end position="75"/>
    </location>
</feature>
<feature type="compositionally biased region" description="Basic and acidic residues" evidence="4">
    <location>
        <begin position="358"/>
        <end position="377"/>
    </location>
</feature>
<feature type="compositionally biased region" description="Basic and acidic residues" evidence="4">
    <location>
        <begin position="412"/>
        <end position="425"/>
    </location>
</feature>
<feature type="mutagenesis site" description="Reduced body size and egg-laying." evidence="5">
    <original>H</original>
    <variation>L</variation>
    <location>
        <position position="758"/>
    </location>
</feature>
<protein>
    <recommendedName>
        <fullName evidence="8">Suppressor of activated egl-4 protein 1</fullName>
    </recommendedName>
</protein>
<name>SAEG1_CAEEL</name>
<proteinExistence type="evidence at protein level"/>
<evidence type="ECO:0000255" key="1">
    <source>
        <dbReference type="PROSITE-ProRule" id="PRU00042"/>
    </source>
</evidence>
<evidence type="ECO:0000255" key="2">
    <source>
        <dbReference type="PROSITE-ProRule" id="PRU00512"/>
    </source>
</evidence>
<evidence type="ECO:0000255" key="3">
    <source>
        <dbReference type="PROSITE-ProRule" id="PRU00624"/>
    </source>
</evidence>
<evidence type="ECO:0000256" key="4">
    <source>
        <dbReference type="SAM" id="MobiDB-lite"/>
    </source>
</evidence>
<evidence type="ECO:0000269" key="5">
    <source>
    </source>
</evidence>
<evidence type="ECO:0000305" key="6"/>
<evidence type="ECO:0000312" key="7">
    <source>
        <dbReference type="Proteomes" id="UP000001940"/>
    </source>
</evidence>
<evidence type="ECO:0000312" key="8">
    <source>
        <dbReference type="WormBase" id="F53H10.2a"/>
    </source>
</evidence>
<comment type="function">
    <text evidence="5">As a likely component of a histone deacetylase complex, together with saeg-2 and hda-2, functions downstream of the cAMP-dependent kinase egl-4 to regulate the expression of genes required for egg-laying and foraging.</text>
</comment>
<comment type="subunit">
    <text evidence="5">May be a component of a histone deacetylase complex containing saeg-2, saeg-1 and hda-2. May interact with egl-4.</text>
</comment>
<comment type="subcellular location">
    <subcellularLocation>
        <location evidence="5">Nucleus</location>
    </subcellularLocation>
</comment>
<comment type="tissue specificity">
    <text evidence="5">Ubiquitously expressed.</text>
</comment>
<gene>
    <name evidence="8" type="primary">saeg-1</name>
    <name evidence="8" type="ORF">F53H10.2</name>
</gene>
<accession>Q20733</accession>
<organism evidence="7">
    <name type="scientific">Caenorhabditis elegans</name>
    <dbReference type="NCBI Taxonomy" id="6239"/>
    <lineage>
        <taxon>Eukaryota</taxon>
        <taxon>Metazoa</taxon>
        <taxon>Ecdysozoa</taxon>
        <taxon>Nematoda</taxon>
        <taxon>Chromadorea</taxon>
        <taxon>Rhabditida</taxon>
        <taxon>Rhabditina</taxon>
        <taxon>Rhabditomorpha</taxon>
        <taxon>Rhabditoidea</taxon>
        <taxon>Rhabditidae</taxon>
        <taxon>Peloderinae</taxon>
        <taxon>Caenorhabditis</taxon>
    </lineage>
</organism>
<keyword id="KW-0175">Coiled coil</keyword>
<keyword id="KW-0479">Metal-binding</keyword>
<keyword id="KW-0539">Nucleus</keyword>
<keyword id="KW-1185">Reference proteome</keyword>
<keyword id="KW-0678">Repressor</keyword>
<keyword id="KW-0804">Transcription</keyword>
<keyword id="KW-0805">Transcription regulation</keyword>
<keyword id="KW-0862">Zinc</keyword>
<keyword id="KW-0863">Zinc-finger</keyword>
<dbReference type="EMBL" id="BX284605">
    <property type="protein sequence ID" value="CAB01216.2"/>
    <property type="molecule type" value="Genomic_DNA"/>
</dbReference>
<dbReference type="PIR" id="T22592">
    <property type="entry name" value="T22592"/>
</dbReference>
<dbReference type="RefSeq" id="NP_505769.2">
    <property type="nucleotide sequence ID" value="NM_073368.7"/>
</dbReference>
<dbReference type="FunCoup" id="Q20733">
    <property type="interactions" value="26"/>
</dbReference>
<dbReference type="IntAct" id="Q20733">
    <property type="interactions" value="11"/>
</dbReference>
<dbReference type="STRING" id="6239.F53H10.2a.1"/>
<dbReference type="PaxDb" id="6239-F53H10.2a"/>
<dbReference type="EnsemblMetazoa" id="F53H10.2a.1">
    <property type="protein sequence ID" value="F53H10.2a.1"/>
    <property type="gene ID" value="WBGene00010012"/>
</dbReference>
<dbReference type="GeneID" id="179505"/>
<dbReference type="KEGG" id="cel:CELE_F53H10.2"/>
<dbReference type="UCSC" id="F53H10.2a">
    <property type="organism name" value="c. elegans"/>
</dbReference>
<dbReference type="AGR" id="WB:WBGene00010012"/>
<dbReference type="CTD" id="179505"/>
<dbReference type="WormBase" id="F53H10.2a">
    <property type="protein sequence ID" value="CE32433"/>
    <property type="gene ID" value="WBGene00010012"/>
    <property type="gene designation" value="saeg-1"/>
</dbReference>
<dbReference type="eggNOG" id="KOG4167">
    <property type="taxonomic scope" value="Eukaryota"/>
</dbReference>
<dbReference type="GeneTree" id="ENSGT00940000169235"/>
<dbReference type="InParanoid" id="Q20733"/>
<dbReference type="OMA" id="KESWAST"/>
<dbReference type="OrthoDB" id="10258692at2759"/>
<dbReference type="PhylomeDB" id="Q20733"/>
<dbReference type="SignaLink" id="Q20733"/>
<dbReference type="PRO" id="PR:Q20733"/>
<dbReference type="Proteomes" id="UP000001940">
    <property type="component" value="Chromosome V"/>
</dbReference>
<dbReference type="Bgee" id="WBGene00010012">
    <property type="expression patterns" value="Expressed in larva and 4 other cell types or tissues"/>
</dbReference>
<dbReference type="ExpressionAtlas" id="Q20733">
    <property type="expression patterns" value="baseline and differential"/>
</dbReference>
<dbReference type="GO" id="GO:0000118">
    <property type="term" value="C:histone deacetylase complex"/>
    <property type="evidence" value="ECO:0000318"/>
    <property type="project" value="GO_Central"/>
</dbReference>
<dbReference type="GO" id="GO:0005634">
    <property type="term" value="C:nucleus"/>
    <property type="evidence" value="ECO:0000314"/>
    <property type="project" value="WormBase"/>
</dbReference>
<dbReference type="GO" id="GO:0005667">
    <property type="term" value="C:transcription regulator complex"/>
    <property type="evidence" value="ECO:0000318"/>
    <property type="project" value="GO_Central"/>
</dbReference>
<dbReference type="GO" id="GO:0003714">
    <property type="term" value="F:transcription corepressor activity"/>
    <property type="evidence" value="ECO:0000318"/>
    <property type="project" value="GO_Central"/>
</dbReference>
<dbReference type="GO" id="GO:0008270">
    <property type="term" value="F:zinc ion binding"/>
    <property type="evidence" value="ECO:0007669"/>
    <property type="project" value="UniProtKB-KW"/>
</dbReference>
<dbReference type="GO" id="GO:0045892">
    <property type="term" value="P:negative regulation of DNA-templated transcription"/>
    <property type="evidence" value="ECO:0000318"/>
    <property type="project" value="GO_Central"/>
</dbReference>
<dbReference type="GO" id="GO:0006357">
    <property type="term" value="P:regulation of transcription by RNA polymerase II"/>
    <property type="evidence" value="ECO:0000318"/>
    <property type="project" value="GO_Central"/>
</dbReference>
<dbReference type="Gene3D" id="1.10.10.60">
    <property type="entry name" value="Homeodomain-like"/>
    <property type="match status" value="1"/>
</dbReference>
<dbReference type="InterPro" id="IPR000949">
    <property type="entry name" value="ELM2_dom"/>
</dbReference>
<dbReference type="InterPro" id="IPR009057">
    <property type="entry name" value="Homeodomain-like_sf"/>
</dbReference>
<dbReference type="InterPro" id="IPR001005">
    <property type="entry name" value="SANT/Myb"/>
</dbReference>
<dbReference type="InterPro" id="IPR017884">
    <property type="entry name" value="SANT_dom"/>
</dbReference>
<dbReference type="InterPro" id="IPR051066">
    <property type="entry name" value="Trans_reg/Corepressor"/>
</dbReference>
<dbReference type="InterPro" id="IPR013087">
    <property type="entry name" value="Znf_C2H2_type"/>
</dbReference>
<dbReference type="PANTHER" id="PTHR16089">
    <property type="entry name" value="REST COREPRESSOR COREST PROTEIN-RELATED"/>
    <property type="match status" value="1"/>
</dbReference>
<dbReference type="PANTHER" id="PTHR16089:SF40">
    <property type="entry name" value="SUPPRESSOR OF ACTIVATED EGL-4 PROTEIN 1"/>
    <property type="match status" value="1"/>
</dbReference>
<dbReference type="Pfam" id="PF00249">
    <property type="entry name" value="Myb_DNA-binding"/>
    <property type="match status" value="1"/>
</dbReference>
<dbReference type="SMART" id="SM01189">
    <property type="entry name" value="ELM2"/>
    <property type="match status" value="1"/>
</dbReference>
<dbReference type="SMART" id="SM00717">
    <property type="entry name" value="SANT"/>
    <property type="match status" value="1"/>
</dbReference>
<dbReference type="SUPFAM" id="SSF46689">
    <property type="entry name" value="Homeodomain-like"/>
    <property type="match status" value="1"/>
</dbReference>
<dbReference type="PROSITE" id="PS51156">
    <property type="entry name" value="ELM2"/>
    <property type="match status" value="1"/>
</dbReference>
<dbReference type="PROSITE" id="PS51293">
    <property type="entry name" value="SANT"/>
    <property type="match status" value="1"/>
</dbReference>
<dbReference type="PROSITE" id="PS00028">
    <property type="entry name" value="ZINC_FINGER_C2H2_1"/>
    <property type="match status" value="1"/>
</dbReference>
<dbReference type="PROSITE" id="PS50157">
    <property type="entry name" value="ZINC_FINGER_C2H2_2"/>
    <property type="match status" value="1"/>
</dbReference>
<reference evidence="7" key="1">
    <citation type="journal article" date="1998" name="Science">
        <title>Genome sequence of the nematode C. elegans: a platform for investigating biology.</title>
        <authorList>
            <consortium name="The C. elegans sequencing consortium"/>
        </authorList>
    </citation>
    <scope>NUCLEOTIDE SEQUENCE [LARGE SCALE GENOMIC DNA]</scope>
    <source>
        <strain evidence="7">Bristol N2</strain>
    </source>
</reference>
<reference evidence="6" key="2">
    <citation type="journal article" date="2011" name="PLoS Genet.">
        <title>Nuclear cGMP-dependent kinase regulates gene expression via activity-dependent recruitment of a conserved histone deacetylase complex.</title>
        <authorList>
            <person name="Hao Y."/>
            <person name="Xu N."/>
            <person name="Box A.C."/>
            <person name="Schaefer L."/>
            <person name="Kannan K."/>
            <person name="Zhang Y."/>
            <person name="Florens L."/>
            <person name="Seidel C."/>
            <person name="Washburn M.P."/>
            <person name="Wiegraebe W."/>
            <person name="Mak H.Y."/>
        </authorList>
    </citation>
    <scope>FUNCTION</scope>
    <scope>IDENTIFICATION IN HISTONE DEACETYLASE COMPLEX</scope>
    <scope>INTERACTION WITH EGL-4</scope>
    <scope>SUBCELLULAR LOCATION</scope>
    <scope>TISSUE SPECIFICITY</scope>
    <scope>MUTAGENESIS OF HIS-758</scope>
</reference>
<sequence>MPPPQHPPNYYAPRRSISTITGPNRRDVDAFYQNNFPEKNGGSSGEHVPEYQASGQQHRPSIMSGQSHQNNHLPTKNYSYEPLRFSPPNVTPPPLQFSTNTDGNRKNQRVRFNELPNYSTPNHYSVPPRKCSLAPNFFSSQNSHHMYPDQYTPRTWQNNEFMPNHQVHPYHANHQQQHPQQHWRNQAASNGNHNPMYMRKHSAGHGIEIKLDHVDNPFGNPSHDMMDVTSGQPVKSEMLSPIKMETTDPSQQIASPSFLMTSTSLLKQHLHKKSHHNVPSRKASIMALKSQLRTPRGTPLNISTVPGTELPYTPPPILAPMRNGSGLFCQIVKSANSSLPVAEQSPDAPSCSTNGVDGDMKHLMNGKKRSEDGDGPSRKNGFFYMAQQMNQTNFANELEALRKESWASTSSADEKMQTERKESLESIRKASCMSDSYYEIEEGPKISDPNPHINLGKNYQARVKKWCDRQVSTSERDAIEDRDEIVFSSEILQDIDPEQITAFELLACSQACPRAGRNKELALHLLMENKGNIEAAVEDLLRSDTLDWEHYSSVFGYMYNDSVLWTPDEIYQFQDAIYQSEKDFDKVAVELPGKSVKECVQFYYTWKKDCPDDYRKLRNLRRKRQLLDINLQKNQSEEPVVPAKKISIIESGDSDNESNATDSSFIGNGHMEFRDRAFTSPMMSSPREEPIIGLSPSSKDLFGIQKNYQPTAPRAHHTPSASASKKGAQPSADGFFHCRLCDKCFEKVKSLNAHMKSHAMKARAEQEAKAHDAQVAAAAAAQLTSAVGNVVGNPVATSPLNSFANGHLGISIPSTIGNLTPQQLTPQQLNLNQQLQTQLNSLSNQMSLNSPLTPQQQLQQFTQQHLMARAMQQNLFQPVTSTPLVQPTHPLIQAGLHSIN</sequence>